<reference key="1">
    <citation type="journal article" date="1991" name="Nucleic Acids Res.">
        <title>A plant DNA binding protein shares highly conserved sequence motifs with HMG-box proteins.</title>
        <authorList>
            <person name="Laux T."/>
            <person name="Goldberg R.B."/>
        </authorList>
    </citation>
    <scope>NUCLEOTIDE SEQUENCE [MRNA]</scope>
    <source>
        <strain>cv. Dare</strain>
        <tissue>Embryo</tissue>
    </source>
</reference>
<accession>P26585</accession>
<proteinExistence type="evidence at transcript level"/>
<organism>
    <name type="scientific">Glycine max</name>
    <name type="common">Soybean</name>
    <name type="synonym">Glycine hispida</name>
    <dbReference type="NCBI Taxonomy" id="3847"/>
    <lineage>
        <taxon>Eukaryota</taxon>
        <taxon>Viridiplantae</taxon>
        <taxon>Streptophyta</taxon>
        <taxon>Embryophyta</taxon>
        <taxon>Tracheophyta</taxon>
        <taxon>Spermatophyta</taxon>
        <taxon>Magnoliopsida</taxon>
        <taxon>eudicotyledons</taxon>
        <taxon>Gunneridae</taxon>
        <taxon>Pentapetalae</taxon>
        <taxon>rosids</taxon>
        <taxon>fabids</taxon>
        <taxon>Fabales</taxon>
        <taxon>Fabaceae</taxon>
        <taxon>Papilionoideae</taxon>
        <taxon>50 kb inversion clade</taxon>
        <taxon>NPAAA clade</taxon>
        <taxon>indigoferoid/millettioid clade</taxon>
        <taxon>Phaseoleae</taxon>
        <taxon>Glycine</taxon>
        <taxon>Glycine subgen. Soja</taxon>
    </lineage>
</organism>
<feature type="chain" id="PRO_0000048554" description="HMG1/2-like protein">
    <location>
        <begin position="1"/>
        <end position="152"/>
    </location>
</feature>
<feature type="DNA-binding region" description="HMG box" evidence="1">
    <location>
        <begin position="44"/>
        <end position="113"/>
    </location>
</feature>
<feature type="region of interest" description="Disordered" evidence="2">
    <location>
        <begin position="1"/>
        <end position="48"/>
    </location>
</feature>
<feature type="region of interest" description="Disordered" evidence="2">
    <location>
        <begin position="74"/>
        <end position="152"/>
    </location>
</feature>
<feature type="compositionally biased region" description="Basic and acidic residues" evidence="2">
    <location>
        <begin position="1"/>
        <end position="15"/>
    </location>
</feature>
<feature type="compositionally biased region" description="Low complexity" evidence="2">
    <location>
        <begin position="74"/>
        <end position="84"/>
    </location>
</feature>
<feature type="compositionally biased region" description="Basic and acidic residues" evidence="2">
    <location>
        <begin position="85"/>
        <end position="109"/>
    </location>
</feature>
<feature type="compositionally biased region" description="Acidic residues" evidence="2">
    <location>
        <begin position="135"/>
        <end position="152"/>
    </location>
</feature>
<name>HMGL_SOYBN</name>
<dbReference type="EMBL" id="X58245">
    <property type="protein sequence ID" value="CAA41200.1"/>
    <property type="molecule type" value="mRNA"/>
</dbReference>
<dbReference type="PIR" id="S22309">
    <property type="entry name" value="S22309"/>
</dbReference>
<dbReference type="RefSeq" id="NP_001236841.1">
    <property type="nucleotide sequence ID" value="NM_001249912.1"/>
</dbReference>
<dbReference type="SMR" id="P26585"/>
<dbReference type="FunCoup" id="P26585">
    <property type="interactions" value="4493"/>
</dbReference>
<dbReference type="STRING" id="3847.P26585"/>
<dbReference type="PaxDb" id="3847-GLYMA06G01970.1"/>
<dbReference type="EnsemblPlants" id="KRH51595">
    <property type="protein sequence ID" value="KRH51595"/>
    <property type="gene ID" value="GLYMA_06G017100"/>
</dbReference>
<dbReference type="GeneID" id="547975"/>
<dbReference type="Gramene" id="KRH51595">
    <property type="protein sequence ID" value="KRH51595"/>
    <property type="gene ID" value="GLYMA_06G017100"/>
</dbReference>
<dbReference type="KEGG" id="gmx:547975"/>
<dbReference type="eggNOG" id="KOG0381">
    <property type="taxonomic scope" value="Eukaryota"/>
</dbReference>
<dbReference type="InParanoid" id="P26585"/>
<dbReference type="OMA" id="NTHSIMP"/>
<dbReference type="OrthoDB" id="1919336at2759"/>
<dbReference type="Proteomes" id="UP000008827">
    <property type="component" value="Chromosome 6"/>
</dbReference>
<dbReference type="GO" id="GO:0000785">
    <property type="term" value="C:chromatin"/>
    <property type="evidence" value="ECO:0007669"/>
    <property type="project" value="UniProtKB-ARBA"/>
</dbReference>
<dbReference type="GO" id="GO:0005634">
    <property type="term" value="C:nucleus"/>
    <property type="evidence" value="ECO:0007669"/>
    <property type="project" value="UniProtKB-SubCell"/>
</dbReference>
<dbReference type="GO" id="GO:0003682">
    <property type="term" value="F:chromatin binding"/>
    <property type="evidence" value="ECO:0007669"/>
    <property type="project" value="UniProtKB-ARBA"/>
</dbReference>
<dbReference type="GO" id="GO:0003677">
    <property type="term" value="F:DNA binding"/>
    <property type="evidence" value="ECO:0007669"/>
    <property type="project" value="UniProtKB-KW"/>
</dbReference>
<dbReference type="GO" id="GO:0030527">
    <property type="term" value="F:structural constituent of chromatin"/>
    <property type="evidence" value="ECO:0007669"/>
    <property type="project" value="UniProtKB-ARBA"/>
</dbReference>
<dbReference type="GO" id="GO:0006325">
    <property type="term" value="P:chromatin organization"/>
    <property type="evidence" value="ECO:0007669"/>
    <property type="project" value="UniProtKB-ARBA"/>
</dbReference>
<dbReference type="CDD" id="cd22005">
    <property type="entry name" value="HMG-box_AtHMGB1-like"/>
    <property type="match status" value="1"/>
</dbReference>
<dbReference type="Gene3D" id="1.10.30.10">
    <property type="entry name" value="High mobility group box domain"/>
    <property type="match status" value="1"/>
</dbReference>
<dbReference type="InterPro" id="IPR009071">
    <property type="entry name" value="HMG_box_dom"/>
</dbReference>
<dbReference type="InterPro" id="IPR036910">
    <property type="entry name" value="HMG_box_dom_sf"/>
</dbReference>
<dbReference type="InterPro" id="IPR031061">
    <property type="entry name" value="HMGB_plant"/>
</dbReference>
<dbReference type="PANTHER" id="PTHR46261:SF22">
    <property type="entry name" value="HIGH MOBILITY GROUP B PROTEIN 2-RELATED"/>
    <property type="match status" value="1"/>
</dbReference>
<dbReference type="PANTHER" id="PTHR46261">
    <property type="entry name" value="HIGH MOBILITY GROUP B PROTEIN 4-RELATED"/>
    <property type="match status" value="1"/>
</dbReference>
<dbReference type="Pfam" id="PF00505">
    <property type="entry name" value="HMG_box"/>
    <property type="match status" value="1"/>
</dbReference>
<dbReference type="SMART" id="SM00398">
    <property type="entry name" value="HMG"/>
    <property type="match status" value="1"/>
</dbReference>
<dbReference type="SUPFAM" id="SSF47095">
    <property type="entry name" value="HMG-box"/>
    <property type="match status" value="1"/>
</dbReference>
<dbReference type="PROSITE" id="PS50118">
    <property type="entry name" value="HMG_BOX_2"/>
    <property type="match status" value="1"/>
</dbReference>
<sequence>MKGGKSKTESKRADPKLAVNKKGAATKARKPAGKGKAAKDPNKPKRPPSAFFVFMEEFRKVFNKEHPENKAVSAVGKAAGAKWKTMSDAEKAPYVAKSEKRKVEYEKNMRAYNKKQAEGPTGGDEEESEKSVSEVNDEDDDEEGSGEEEDDD</sequence>
<protein>
    <recommendedName>
        <fullName>HMG1/2-like protein</fullName>
    </recommendedName>
    <alternativeName>
        <fullName>Protein SB11</fullName>
    </alternativeName>
</protein>
<evidence type="ECO:0000255" key="1">
    <source>
        <dbReference type="PROSITE-ProRule" id="PRU00267"/>
    </source>
</evidence>
<evidence type="ECO:0000256" key="2">
    <source>
        <dbReference type="SAM" id="MobiDB-lite"/>
    </source>
</evidence>
<evidence type="ECO:0000305" key="3"/>
<comment type="subcellular location">
    <subcellularLocation>
        <location evidence="1">Nucleus</location>
    </subcellularLocation>
</comment>
<comment type="similarity">
    <text evidence="3">Belongs to the HMGB family.</text>
</comment>
<keyword id="KW-0238">DNA-binding</keyword>
<keyword id="KW-0539">Nucleus</keyword>
<keyword id="KW-1185">Reference proteome</keyword>